<dbReference type="EMBL" id="CP000872">
    <property type="protein sequence ID" value="ABX61138.1"/>
    <property type="molecule type" value="Genomic_DNA"/>
</dbReference>
<dbReference type="RefSeq" id="WP_002965279.1">
    <property type="nucleotide sequence ID" value="NC_010103.1"/>
</dbReference>
<dbReference type="SMR" id="A9M6N7"/>
<dbReference type="GeneID" id="97534533"/>
<dbReference type="KEGG" id="bcs:BCAN_A0033"/>
<dbReference type="HOGENOM" id="CLU_060739_1_1_5"/>
<dbReference type="PhylomeDB" id="A9M6N7"/>
<dbReference type="Proteomes" id="UP000001385">
    <property type="component" value="Chromosome I"/>
</dbReference>
<dbReference type="GO" id="GO:0003677">
    <property type="term" value="F:DNA binding"/>
    <property type="evidence" value="ECO:0007669"/>
    <property type="project" value="UniProtKB-UniRule"/>
</dbReference>
<dbReference type="GO" id="GO:0008270">
    <property type="term" value="F:zinc ion binding"/>
    <property type="evidence" value="ECO:0007669"/>
    <property type="project" value="UniProtKB-KW"/>
</dbReference>
<dbReference type="GO" id="GO:0006310">
    <property type="term" value="P:DNA recombination"/>
    <property type="evidence" value="ECO:0007669"/>
    <property type="project" value="UniProtKB-UniRule"/>
</dbReference>
<dbReference type="GO" id="GO:0006281">
    <property type="term" value="P:DNA repair"/>
    <property type="evidence" value="ECO:0007669"/>
    <property type="project" value="UniProtKB-UniRule"/>
</dbReference>
<dbReference type="CDD" id="cd01025">
    <property type="entry name" value="TOPRIM_recR"/>
    <property type="match status" value="1"/>
</dbReference>
<dbReference type="Gene3D" id="3.40.1360.10">
    <property type="match status" value="1"/>
</dbReference>
<dbReference type="Gene3D" id="6.10.250.240">
    <property type="match status" value="1"/>
</dbReference>
<dbReference type="Gene3D" id="1.10.8.420">
    <property type="entry name" value="RecR Domain 1"/>
    <property type="match status" value="1"/>
</dbReference>
<dbReference type="HAMAP" id="MF_00017">
    <property type="entry name" value="RecR"/>
    <property type="match status" value="1"/>
</dbReference>
<dbReference type="InterPro" id="IPR000093">
    <property type="entry name" value="DNA_Rcmb_RecR"/>
</dbReference>
<dbReference type="InterPro" id="IPR023627">
    <property type="entry name" value="Rcmb_RecR"/>
</dbReference>
<dbReference type="InterPro" id="IPR015967">
    <property type="entry name" value="Rcmb_RecR_Znf"/>
</dbReference>
<dbReference type="InterPro" id="IPR006171">
    <property type="entry name" value="TOPRIM_dom"/>
</dbReference>
<dbReference type="InterPro" id="IPR034137">
    <property type="entry name" value="TOPRIM_RecR"/>
</dbReference>
<dbReference type="NCBIfam" id="TIGR00615">
    <property type="entry name" value="recR"/>
    <property type="match status" value="1"/>
</dbReference>
<dbReference type="PANTHER" id="PTHR30446">
    <property type="entry name" value="RECOMBINATION PROTEIN RECR"/>
    <property type="match status" value="1"/>
</dbReference>
<dbReference type="PANTHER" id="PTHR30446:SF0">
    <property type="entry name" value="RECOMBINATION PROTEIN RECR"/>
    <property type="match status" value="1"/>
</dbReference>
<dbReference type="Pfam" id="PF21175">
    <property type="entry name" value="RecR_C"/>
    <property type="match status" value="1"/>
</dbReference>
<dbReference type="Pfam" id="PF21176">
    <property type="entry name" value="RecR_HhH"/>
    <property type="match status" value="1"/>
</dbReference>
<dbReference type="Pfam" id="PF02132">
    <property type="entry name" value="RecR_ZnF"/>
    <property type="match status" value="1"/>
</dbReference>
<dbReference type="Pfam" id="PF13662">
    <property type="entry name" value="Toprim_4"/>
    <property type="match status" value="1"/>
</dbReference>
<dbReference type="SMART" id="SM00493">
    <property type="entry name" value="TOPRIM"/>
    <property type="match status" value="1"/>
</dbReference>
<dbReference type="SUPFAM" id="SSF111304">
    <property type="entry name" value="Recombination protein RecR"/>
    <property type="match status" value="1"/>
</dbReference>
<dbReference type="PROSITE" id="PS01300">
    <property type="entry name" value="RECR"/>
    <property type="match status" value="1"/>
</dbReference>
<dbReference type="PROSITE" id="PS50880">
    <property type="entry name" value="TOPRIM"/>
    <property type="match status" value="1"/>
</dbReference>
<accession>A9M6N7</accession>
<sequence>MSKRIAGPEIERLIQLLARVPGLGPRSARRAALHLIKKKEALLVPLGGAMQEAAEKVRICSCCGNVDTSDPCTICTDERRDPATLIVVEDVSDLWALERAGTMNVRYHVLGGRLSPLDGIGPDDLNIKGLVERVASGAIKEVILAVNATVEGQTTAHYITDQLSNFDVRVTRLAHGVPVGGELDYLDEGTLAAALRARTTL</sequence>
<evidence type="ECO:0000255" key="1">
    <source>
        <dbReference type="HAMAP-Rule" id="MF_00017"/>
    </source>
</evidence>
<keyword id="KW-0227">DNA damage</keyword>
<keyword id="KW-0233">DNA recombination</keyword>
<keyword id="KW-0234">DNA repair</keyword>
<keyword id="KW-0479">Metal-binding</keyword>
<keyword id="KW-1185">Reference proteome</keyword>
<keyword id="KW-0862">Zinc</keyword>
<keyword id="KW-0863">Zinc-finger</keyword>
<protein>
    <recommendedName>
        <fullName evidence="1">Recombination protein RecR</fullName>
    </recommendedName>
</protein>
<comment type="function">
    <text evidence="1">May play a role in DNA repair. It seems to be involved in an RecBC-independent recombinational process of DNA repair. It may act with RecF and RecO.</text>
</comment>
<comment type="similarity">
    <text evidence="1">Belongs to the RecR family.</text>
</comment>
<gene>
    <name evidence="1" type="primary">recR</name>
    <name type="ordered locus">BCAN_A0033</name>
</gene>
<reference key="1">
    <citation type="submission" date="2007-10" db="EMBL/GenBank/DDBJ databases">
        <title>Brucella canis ATCC 23365 whole genome shotgun sequencing project.</title>
        <authorList>
            <person name="Setubal J.C."/>
            <person name="Bowns C."/>
            <person name="Boyle S."/>
            <person name="Crasta O.R."/>
            <person name="Czar M.J."/>
            <person name="Dharmanolla C."/>
            <person name="Gillespie J.J."/>
            <person name="Kenyon R.W."/>
            <person name="Lu J."/>
            <person name="Mane S."/>
            <person name="Mohapatra S."/>
            <person name="Nagrani S."/>
            <person name="Purkayastha A."/>
            <person name="Rajasimha H.K."/>
            <person name="Shallom J.M."/>
            <person name="Shallom S."/>
            <person name="Shukla M."/>
            <person name="Snyder E.E."/>
            <person name="Sobral B.W."/>
            <person name="Wattam A.R."/>
            <person name="Will R."/>
            <person name="Williams K."/>
            <person name="Yoo H."/>
            <person name="Bruce D."/>
            <person name="Detter C."/>
            <person name="Munk C."/>
            <person name="Brettin T.S."/>
        </authorList>
    </citation>
    <scope>NUCLEOTIDE SEQUENCE [LARGE SCALE GENOMIC DNA]</scope>
    <source>
        <strain>ATCC 23365 / NCTC 10854 / RM-666</strain>
    </source>
</reference>
<name>RECR_BRUC2</name>
<feature type="chain" id="PRO_1000074112" description="Recombination protein RecR">
    <location>
        <begin position="1"/>
        <end position="201"/>
    </location>
</feature>
<feature type="domain" description="Toprim" evidence="1">
    <location>
        <begin position="83"/>
        <end position="178"/>
    </location>
</feature>
<feature type="zinc finger region" description="C4-type" evidence="1">
    <location>
        <begin position="60"/>
        <end position="75"/>
    </location>
</feature>
<organism>
    <name type="scientific">Brucella canis (strain ATCC 23365 / NCTC 10854 / RM-666)</name>
    <dbReference type="NCBI Taxonomy" id="483179"/>
    <lineage>
        <taxon>Bacteria</taxon>
        <taxon>Pseudomonadati</taxon>
        <taxon>Pseudomonadota</taxon>
        <taxon>Alphaproteobacteria</taxon>
        <taxon>Hyphomicrobiales</taxon>
        <taxon>Brucellaceae</taxon>
        <taxon>Brucella/Ochrobactrum group</taxon>
        <taxon>Brucella</taxon>
    </lineage>
</organism>
<proteinExistence type="inferred from homology"/>